<accession>B0VT90</accession>
<proteinExistence type="inferred from homology"/>
<sequence>MIGCLIGEVFALEAPTVLLNVNGVGYEIDTPLSTFCQLQKGQKVTLWTHLVIREDAQQLYGFSDAQEKTIFRTLLKVNGVGPKMALGILSTLSVELLVHTIEHDDVNTLVKVPGVGKKTAERLMIELRDRFKTLAQGTSSAAALPQIQFVSNSPVAEAEAALQSLGYKPLEAQKAVAAVKADYTESADIIRAALKSMMK</sequence>
<keyword id="KW-0963">Cytoplasm</keyword>
<keyword id="KW-0227">DNA damage</keyword>
<keyword id="KW-0233">DNA recombination</keyword>
<keyword id="KW-0234">DNA repair</keyword>
<keyword id="KW-0238">DNA-binding</keyword>
<comment type="function">
    <text evidence="1">The RuvA-RuvB-RuvC complex processes Holliday junction (HJ) DNA during genetic recombination and DNA repair, while the RuvA-RuvB complex plays an important role in the rescue of blocked DNA replication forks via replication fork reversal (RFR). RuvA specifically binds to HJ cruciform DNA, conferring on it an open structure. The RuvB hexamer acts as an ATP-dependent pump, pulling dsDNA into and through the RuvAB complex. HJ branch migration allows RuvC to scan DNA until it finds its consensus sequence, where it cleaves and resolves the cruciform DNA.</text>
</comment>
<comment type="subunit">
    <text evidence="1">Homotetramer. Forms an RuvA(8)-RuvB(12)-Holliday junction (HJ) complex. HJ DNA is sandwiched between 2 RuvA tetramers; dsDNA enters through RuvA and exits via RuvB. An RuvB hexamer assembles on each DNA strand where it exits the tetramer. Each RuvB hexamer is contacted by two RuvA subunits (via domain III) on 2 adjacent RuvB subunits; this complex drives branch migration. In the full resolvosome a probable DNA-RuvA(4)-RuvB(12)-RuvC(2) complex forms which resolves the HJ.</text>
</comment>
<comment type="subcellular location">
    <subcellularLocation>
        <location evidence="1">Cytoplasm</location>
    </subcellularLocation>
</comment>
<comment type="domain">
    <text evidence="1">Has three domains with a flexible linker between the domains II and III and assumes an 'L' shape. Domain III is highly mobile and contacts RuvB.</text>
</comment>
<comment type="similarity">
    <text evidence="1">Belongs to the RuvA family.</text>
</comment>
<protein>
    <recommendedName>
        <fullName evidence="1">Holliday junction branch migration complex subunit RuvA</fullName>
    </recommendedName>
</protein>
<feature type="chain" id="PRO_1000090271" description="Holliday junction branch migration complex subunit RuvA">
    <location>
        <begin position="1"/>
        <end position="199"/>
    </location>
</feature>
<feature type="region of interest" description="Domain I" evidence="1">
    <location>
        <begin position="1"/>
        <end position="63"/>
    </location>
</feature>
<feature type="region of interest" description="Domain II" evidence="1">
    <location>
        <begin position="64"/>
        <end position="142"/>
    </location>
</feature>
<feature type="region of interest" description="Flexible linker" evidence="1">
    <location>
        <begin position="143"/>
        <end position="150"/>
    </location>
</feature>
<feature type="region of interest" description="Domain III" evidence="1">
    <location>
        <begin position="150"/>
        <end position="199"/>
    </location>
</feature>
<evidence type="ECO:0000255" key="1">
    <source>
        <dbReference type="HAMAP-Rule" id="MF_00031"/>
    </source>
</evidence>
<reference key="1">
    <citation type="journal article" date="2008" name="PLoS ONE">
        <title>Comparative analysis of Acinetobacters: three genomes for three lifestyles.</title>
        <authorList>
            <person name="Vallenet D."/>
            <person name="Nordmann P."/>
            <person name="Barbe V."/>
            <person name="Poirel L."/>
            <person name="Mangenot S."/>
            <person name="Bataille E."/>
            <person name="Dossat C."/>
            <person name="Gas S."/>
            <person name="Kreimeyer A."/>
            <person name="Lenoble P."/>
            <person name="Oztas S."/>
            <person name="Poulain J."/>
            <person name="Segurens B."/>
            <person name="Robert C."/>
            <person name="Abergel C."/>
            <person name="Claverie J.-M."/>
            <person name="Raoult D."/>
            <person name="Medigue C."/>
            <person name="Weissenbach J."/>
            <person name="Cruveiller S."/>
        </authorList>
    </citation>
    <scope>NUCLEOTIDE SEQUENCE [LARGE SCALE GENOMIC DNA]</scope>
    <source>
        <strain>SDF</strain>
    </source>
</reference>
<name>RUVA_ACIBS</name>
<dbReference type="EMBL" id="CU468230">
    <property type="protein sequence ID" value="CAP00277.1"/>
    <property type="molecule type" value="Genomic_DNA"/>
</dbReference>
<dbReference type="SMR" id="B0VT90"/>
<dbReference type="KEGG" id="abm:ABSDF0916"/>
<dbReference type="HOGENOM" id="CLU_087936_0_0_6"/>
<dbReference type="Proteomes" id="UP000001741">
    <property type="component" value="Chromosome"/>
</dbReference>
<dbReference type="GO" id="GO:0005737">
    <property type="term" value="C:cytoplasm"/>
    <property type="evidence" value="ECO:0007669"/>
    <property type="project" value="UniProtKB-SubCell"/>
</dbReference>
<dbReference type="GO" id="GO:0009379">
    <property type="term" value="C:Holliday junction helicase complex"/>
    <property type="evidence" value="ECO:0007669"/>
    <property type="project" value="InterPro"/>
</dbReference>
<dbReference type="GO" id="GO:0048476">
    <property type="term" value="C:Holliday junction resolvase complex"/>
    <property type="evidence" value="ECO:0007669"/>
    <property type="project" value="UniProtKB-UniRule"/>
</dbReference>
<dbReference type="GO" id="GO:0005524">
    <property type="term" value="F:ATP binding"/>
    <property type="evidence" value="ECO:0007669"/>
    <property type="project" value="InterPro"/>
</dbReference>
<dbReference type="GO" id="GO:0000400">
    <property type="term" value="F:four-way junction DNA binding"/>
    <property type="evidence" value="ECO:0007669"/>
    <property type="project" value="UniProtKB-UniRule"/>
</dbReference>
<dbReference type="GO" id="GO:0009378">
    <property type="term" value="F:four-way junction helicase activity"/>
    <property type="evidence" value="ECO:0007669"/>
    <property type="project" value="InterPro"/>
</dbReference>
<dbReference type="GO" id="GO:0006310">
    <property type="term" value="P:DNA recombination"/>
    <property type="evidence" value="ECO:0007669"/>
    <property type="project" value="UniProtKB-UniRule"/>
</dbReference>
<dbReference type="GO" id="GO:0006281">
    <property type="term" value="P:DNA repair"/>
    <property type="evidence" value="ECO:0007669"/>
    <property type="project" value="UniProtKB-UniRule"/>
</dbReference>
<dbReference type="Gene3D" id="1.10.150.20">
    <property type="entry name" value="5' to 3' exonuclease, C-terminal subdomain"/>
    <property type="match status" value="1"/>
</dbReference>
<dbReference type="Gene3D" id="1.10.8.10">
    <property type="entry name" value="DNA helicase RuvA subunit, C-terminal domain"/>
    <property type="match status" value="1"/>
</dbReference>
<dbReference type="Gene3D" id="2.40.50.140">
    <property type="entry name" value="Nucleic acid-binding proteins"/>
    <property type="match status" value="1"/>
</dbReference>
<dbReference type="HAMAP" id="MF_00031">
    <property type="entry name" value="DNA_HJ_migration_RuvA"/>
    <property type="match status" value="1"/>
</dbReference>
<dbReference type="InterPro" id="IPR013849">
    <property type="entry name" value="DNA_helicase_Holl-junc_RuvA_I"/>
</dbReference>
<dbReference type="InterPro" id="IPR003583">
    <property type="entry name" value="Hlx-hairpin-Hlx_DNA-bd_motif"/>
</dbReference>
<dbReference type="InterPro" id="IPR012340">
    <property type="entry name" value="NA-bd_OB-fold"/>
</dbReference>
<dbReference type="InterPro" id="IPR000085">
    <property type="entry name" value="RuvA"/>
</dbReference>
<dbReference type="InterPro" id="IPR010994">
    <property type="entry name" value="RuvA_2-like"/>
</dbReference>
<dbReference type="InterPro" id="IPR011114">
    <property type="entry name" value="RuvA_C"/>
</dbReference>
<dbReference type="InterPro" id="IPR036267">
    <property type="entry name" value="RuvA_C_sf"/>
</dbReference>
<dbReference type="NCBIfam" id="TIGR00084">
    <property type="entry name" value="ruvA"/>
    <property type="match status" value="1"/>
</dbReference>
<dbReference type="Pfam" id="PF14520">
    <property type="entry name" value="HHH_5"/>
    <property type="match status" value="1"/>
</dbReference>
<dbReference type="Pfam" id="PF07499">
    <property type="entry name" value="RuvA_C"/>
    <property type="match status" value="1"/>
</dbReference>
<dbReference type="Pfam" id="PF01330">
    <property type="entry name" value="RuvA_N"/>
    <property type="match status" value="1"/>
</dbReference>
<dbReference type="SMART" id="SM00278">
    <property type="entry name" value="HhH1"/>
    <property type="match status" value="2"/>
</dbReference>
<dbReference type="SUPFAM" id="SSF46929">
    <property type="entry name" value="DNA helicase RuvA subunit, C-terminal domain"/>
    <property type="match status" value="1"/>
</dbReference>
<dbReference type="SUPFAM" id="SSF50249">
    <property type="entry name" value="Nucleic acid-binding proteins"/>
    <property type="match status" value="1"/>
</dbReference>
<dbReference type="SUPFAM" id="SSF47781">
    <property type="entry name" value="RuvA domain 2-like"/>
    <property type="match status" value="1"/>
</dbReference>
<organism>
    <name type="scientific">Acinetobacter baumannii (strain SDF)</name>
    <dbReference type="NCBI Taxonomy" id="509170"/>
    <lineage>
        <taxon>Bacteria</taxon>
        <taxon>Pseudomonadati</taxon>
        <taxon>Pseudomonadota</taxon>
        <taxon>Gammaproteobacteria</taxon>
        <taxon>Moraxellales</taxon>
        <taxon>Moraxellaceae</taxon>
        <taxon>Acinetobacter</taxon>
        <taxon>Acinetobacter calcoaceticus/baumannii complex</taxon>
    </lineage>
</organism>
<gene>
    <name evidence="1" type="primary">ruvA</name>
    <name type="ordered locus">ABSDF0916</name>
</gene>